<keyword id="KW-0963">Cytoplasm</keyword>
<keyword id="KW-0369">Histidine metabolism</keyword>
<keyword id="KW-0378">Hydrolase</keyword>
<keyword id="KW-0408">Iron</keyword>
<keyword id="KW-0479">Metal-binding</keyword>
<keyword id="KW-0862">Zinc</keyword>
<accession>Q983I1</accession>
<dbReference type="EC" id="3.5.2.7" evidence="1"/>
<dbReference type="EMBL" id="BA000012">
    <property type="protein sequence ID" value="BAB53900.1"/>
    <property type="molecule type" value="Genomic_DNA"/>
</dbReference>
<dbReference type="RefSeq" id="WP_010915526.1">
    <property type="nucleotide sequence ID" value="NC_002678.2"/>
</dbReference>
<dbReference type="SMR" id="Q983I1"/>
<dbReference type="KEGG" id="mlo:mlr8319"/>
<dbReference type="eggNOG" id="COG1228">
    <property type="taxonomic scope" value="Bacteria"/>
</dbReference>
<dbReference type="HOGENOM" id="CLU_041647_0_0_5"/>
<dbReference type="UniPathway" id="UPA00379">
    <property type="reaction ID" value="UER00551"/>
</dbReference>
<dbReference type="Proteomes" id="UP000000552">
    <property type="component" value="Chromosome"/>
</dbReference>
<dbReference type="GO" id="GO:0005737">
    <property type="term" value="C:cytoplasm"/>
    <property type="evidence" value="ECO:0007669"/>
    <property type="project" value="UniProtKB-SubCell"/>
</dbReference>
<dbReference type="GO" id="GO:0050480">
    <property type="term" value="F:imidazolonepropionase activity"/>
    <property type="evidence" value="ECO:0007669"/>
    <property type="project" value="UniProtKB-UniRule"/>
</dbReference>
<dbReference type="GO" id="GO:0005506">
    <property type="term" value="F:iron ion binding"/>
    <property type="evidence" value="ECO:0007669"/>
    <property type="project" value="UniProtKB-UniRule"/>
</dbReference>
<dbReference type="GO" id="GO:0008270">
    <property type="term" value="F:zinc ion binding"/>
    <property type="evidence" value="ECO:0007669"/>
    <property type="project" value="UniProtKB-UniRule"/>
</dbReference>
<dbReference type="GO" id="GO:0019556">
    <property type="term" value="P:L-histidine catabolic process to glutamate and formamide"/>
    <property type="evidence" value="ECO:0007669"/>
    <property type="project" value="UniProtKB-UniPathway"/>
</dbReference>
<dbReference type="GO" id="GO:0019557">
    <property type="term" value="P:L-histidine catabolic process to glutamate and formate"/>
    <property type="evidence" value="ECO:0007669"/>
    <property type="project" value="UniProtKB-UniPathway"/>
</dbReference>
<dbReference type="CDD" id="cd01296">
    <property type="entry name" value="Imidazolone-5PH"/>
    <property type="match status" value="1"/>
</dbReference>
<dbReference type="FunFam" id="3.20.20.140:FF:000007">
    <property type="entry name" value="Imidazolonepropionase"/>
    <property type="match status" value="1"/>
</dbReference>
<dbReference type="Gene3D" id="3.20.20.140">
    <property type="entry name" value="Metal-dependent hydrolases"/>
    <property type="match status" value="1"/>
</dbReference>
<dbReference type="Gene3D" id="2.30.40.10">
    <property type="entry name" value="Urease, subunit C, domain 1"/>
    <property type="match status" value="1"/>
</dbReference>
<dbReference type="HAMAP" id="MF_00372">
    <property type="entry name" value="HutI"/>
    <property type="match status" value="1"/>
</dbReference>
<dbReference type="InterPro" id="IPR006680">
    <property type="entry name" value="Amidohydro-rel"/>
</dbReference>
<dbReference type="InterPro" id="IPR005920">
    <property type="entry name" value="HutI"/>
</dbReference>
<dbReference type="InterPro" id="IPR011059">
    <property type="entry name" value="Metal-dep_hydrolase_composite"/>
</dbReference>
<dbReference type="InterPro" id="IPR032466">
    <property type="entry name" value="Metal_Hydrolase"/>
</dbReference>
<dbReference type="NCBIfam" id="TIGR01224">
    <property type="entry name" value="hutI"/>
    <property type="match status" value="1"/>
</dbReference>
<dbReference type="PANTHER" id="PTHR42752">
    <property type="entry name" value="IMIDAZOLONEPROPIONASE"/>
    <property type="match status" value="1"/>
</dbReference>
<dbReference type="PANTHER" id="PTHR42752:SF1">
    <property type="entry name" value="IMIDAZOLONEPROPIONASE-RELATED"/>
    <property type="match status" value="1"/>
</dbReference>
<dbReference type="Pfam" id="PF01979">
    <property type="entry name" value="Amidohydro_1"/>
    <property type="match status" value="1"/>
</dbReference>
<dbReference type="SUPFAM" id="SSF51338">
    <property type="entry name" value="Composite domain of metallo-dependent hydrolases"/>
    <property type="match status" value="1"/>
</dbReference>
<dbReference type="SUPFAM" id="SSF51556">
    <property type="entry name" value="Metallo-dependent hydrolases"/>
    <property type="match status" value="1"/>
</dbReference>
<reference key="1">
    <citation type="journal article" date="2000" name="DNA Res.">
        <title>Complete genome structure of the nitrogen-fixing symbiotic bacterium Mesorhizobium loti.</title>
        <authorList>
            <person name="Kaneko T."/>
            <person name="Nakamura Y."/>
            <person name="Sato S."/>
            <person name="Asamizu E."/>
            <person name="Kato T."/>
            <person name="Sasamoto S."/>
            <person name="Watanabe A."/>
            <person name="Idesawa K."/>
            <person name="Ishikawa A."/>
            <person name="Kawashima K."/>
            <person name="Kimura T."/>
            <person name="Kishida Y."/>
            <person name="Kiyokawa C."/>
            <person name="Kohara M."/>
            <person name="Matsumoto M."/>
            <person name="Matsuno A."/>
            <person name="Mochizuki Y."/>
            <person name="Nakayama S."/>
            <person name="Nakazaki N."/>
            <person name="Shimpo S."/>
            <person name="Sugimoto M."/>
            <person name="Takeuchi C."/>
            <person name="Yamada M."/>
            <person name="Tabata S."/>
        </authorList>
    </citation>
    <scope>NUCLEOTIDE SEQUENCE [LARGE SCALE GENOMIC DNA]</scope>
    <source>
        <strain>LMG 29417 / CECT 9101 / MAFF 303099</strain>
    </source>
</reference>
<name>HUTI_RHILO</name>
<comment type="function">
    <text evidence="1">Catalyzes the hydrolytic cleavage of the carbon-nitrogen bond in imidazolone-5-propanoate to yield N-formimidoyl-L-glutamate. It is the third step in the universal histidine degradation pathway.</text>
</comment>
<comment type="catalytic activity">
    <reaction evidence="1">
        <text>4-imidazolone-5-propanoate + H2O = N-formimidoyl-L-glutamate</text>
        <dbReference type="Rhea" id="RHEA:23660"/>
        <dbReference type="ChEBI" id="CHEBI:15377"/>
        <dbReference type="ChEBI" id="CHEBI:58928"/>
        <dbReference type="ChEBI" id="CHEBI:77893"/>
        <dbReference type="EC" id="3.5.2.7"/>
    </reaction>
</comment>
<comment type="cofactor">
    <cofactor evidence="1">
        <name>Zn(2+)</name>
        <dbReference type="ChEBI" id="CHEBI:29105"/>
    </cofactor>
    <cofactor evidence="1">
        <name>Fe(3+)</name>
        <dbReference type="ChEBI" id="CHEBI:29034"/>
    </cofactor>
    <text evidence="1">Binds 1 zinc or iron ion per subunit.</text>
</comment>
<comment type="pathway">
    <text evidence="1">Amino-acid degradation; L-histidine degradation into L-glutamate; N-formimidoyl-L-glutamate from L-histidine: step 3/3.</text>
</comment>
<comment type="subcellular location">
    <subcellularLocation>
        <location evidence="1">Cytoplasm</location>
    </subcellularLocation>
</comment>
<comment type="similarity">
    <text evidence="1">Belongs to the metallo-dependent hydrolases superfamily. HutI family.</text>
</comment>
<protein>
    <recommendedName>
        <fullName evidence="1">Imidazolonepropionase</fullName>
        <ecNumber evidence="1">3.5.2.7</ecNumber>
    </recommendedName>
    <alternativeName>
        <fullName evidence="1">Imidazolone-5-propionate hydrolase</fullName>
    </alternativeName>
</protein>
<feature type="chain" id="PRO_0000160954" description="Imidazolonepropionase">
    <location>
        <begin position="1"/>
        <end position="409"/>
    </location>
</feature>
<feature type="binding site" evidence="1">
    <location>
        <position position="78"/>
    </location>
    <ligand>
        <name>Fe(3+)</name>
        <dbReference type="ChEBI" id="CHEBI:29034"/>
    </ligand>
</feature>
<feature type="binding site" evidence="1">
    <location>
        <position position="78"/>
    </location>
    <ligand>
        <name>Zn(2+)</name>
        <dbReference type="ChEBI" id="CHEBI:29105"/>
    </ligand>
</feature>
<feature type="binding site" evidence="1">
    <location>
        <position position="80"/>
    </location>
    <ligand>
        <name>Fe(3+)</name>
        <dbReference type="ChEBI" id="CHEBI:29034"/>
    </ligand>
</feature>
<feature type="binding site" evidence="1">
    <location>
        <position position="80"/>
    </location>
    <ligand>
        <name>Zn(2+)</name>
        <dbReference type="ChEBI" id="CHEBI:29105"/>
    </ligand>
</feature>
<feature type="binding site" evidence="1">
    <location>
        <position position="87"/>
    </location>
    <ligand>
        <name>4-imidazolone-5-propanoate</name>
        <dbReference type="ChEBI" id="CHEBI:77893"/>
    </ligand>
</feature>
<feature type="binding site" evidence="1">
    <location>
        <position position="150"/>
    </location>
    <ligand>
        <name>4-imidazolone-5-propanoate</name>
        <dbReference type="ChEBI" id="CHEBI:77893"/>
    </ligand>
</feature>
<feature type="binding site" evidence="1">
    <location>
        <position position="150"/>
    </location>
    <ligand>
        <name>N-formimidoyl-L-glutamate</name>
        <dbReference type="ChEBI" id="CHEBI:58928"/>
    </ligand>
</feature>
<feature type="binding site" evidence="1">
    <location>
        <position position="183"/>
    </location>
    <ligand>
        <name>4-imidazolone-5-propanoate</name>
        <dbReference type="ChEBI" id="CHEBI:77893"/>
    </ligand>
</feature>
<feature type="binding site" evidence="1">
    <location>
        <position position="248"/>
    </location>
    <ligand>
        <name>Fe(3+)</name>
        <dbReference type="ChEBI" id="CHEBI:29034"/>
    </ligand>
</feature>
<feature type="binding site" evidence="1">
    <location>
        <position position="248"/>
    </location>
    <ligand>
        <name>Zn(2+)</name>
        <dbReference type="ChEBI" id="CHEBI:29105"/>
    </ligand>
</feature>
<feature type="binding site" evidence="1">
    <location>
        <position position="251"/>
    </location>
    <ligand>
        <name>4-imidazolone-5-propanoate</name>
        <dbReference type="ChEBI" id="CHEBI:77893"/>
    </ligand>
</feature>
<feature type="binding site" evidence="1">
    <location>
        <position position="323"/>
    </location>
    <ligand>
        <name>Fe(3+)</name>
        <dbReference type="ChEBI" id="CHEBI:29034"/>
    </ligand>
</feature>
<feature type="binding site" evidence="1">
    <location>
        <position position="323"/>
    </location>
    <ligand>
        <name>Zn(2+)</name>
        <dbReference type="ChEBI" id="CHEBI:29105"/>
    </ligand>
</feature>
<feature type="binding site" evidence="1">
    <location>
        <position position="325"/>
    </location>
    <ligand>
        <name>N-formimidoyl-L-glutamate</name>
        <dbReference type="ChEBI" id="CHEBI:58928"/>
    </ligand>
</feature>
<feature type="binding site" evidence="1">
    <location>
        <position position="327"/>
    </location>
    <ligand>
        <name>N-formimidoyl-L-glutamate</name>
        <dbReference type="ChEBI" id="CHEBI:58928"/>
    </ligand>
</feature>
<feature type="binding site" evidence="1">
    <location>
        <position position="328"/>
    </location>
    <ligand>
        <name>4-imidazolone-5-propanoate</name>
        <dbReference type="ChEBI" id="CHEBI:77893"/>
    </ligand>
</feature>
<proteinExistence type="inferred from homology"/>
<organism>
    <name type="scientific">Mesorhizobium japonicum (strain LMG 29417 / CECT 9101 / MAFF 303099)</name>
    <name type="common">Mesorhizobium loti (strain MAFF 303099)</name>
    <dbReference type="NCBI Taxonomy" id="266835"/>
    <lineage>
        <taxon>Bacteria</taxon>
        <taxon>Pseudomonadati</taxon>
        <taxon>Pseudomonadota</taxon>
        <taxon>Alphaproteobacteria</taxon>
        <taxon>Hyphomicrobiales</taxon>
        <taxon>Phyllobacteriaceae</taxon>
        <taxon>Mesorhizobium</taxon>
    </lineage>
</organism>
<sequence>MGGANGKSGLRVWRNARLATMADGVAGLGIVEKGAIATRDGLIIYAGAEASMPALAGPGAETVDCEGRWITPGLIDCHTHLVYAGNRANEFEMRLAGATYEEVARAGGGIVSSVKSLRAANEDELVAQTLPRLDALMAEGVTTVEVKSGYGLDLDNEKKSLRAARRLANERPVTIRTTCLAAHALPPEAKGDKEAFVDLVAGTILPGVAAEKLADAVDGFCEGIAFSPEQIARVFDKARALGLPVKLHADQLSNLHGAALAASYGALSADHLEYTDEAGAAAMAKAGTVATILPGAYYFIRETKKPPVDLFRRHGVKMAVATDSNPGTSPLTSLLLTMNMAATLFGLTVDECLAGVTREAARALGLLDKTGTLEAGKSADLAIWDIERPAELVYRMGFNPLHARIWRGQ</sequence>
<evidence type="ECO:0000255" key="1">
    <source>
        <dbReference type="HAMAP-Rule" id="MF_00372"/>
    </source>
</evidence>
<gene>
    <name evidence="1" type="primary">hutI</name>
    <name type="ordered locus">mlr8319</name>
</gene>